<reference evidence="4" key="1">
    <citation type="journal article" date="2001" name="Yi Chuan Xue Bao">
        <title>Protein database for several tissues derived from five instar of silkworm.</title>
        <authorList>
            <person name="Zhong B.-X."/>
        </authorList>
    </citation>
    <scope>PROTEIN SEQUENCE</scope>
    <source>
        <strain evidence="2">Xinhang X Keming</strain>
        <tissue evidence="2">Body wall</tissue>
        <tissue evidence="2">Fat body</tissue>
    </source>
</reference>
<organism>
    <name type="scientific">Bombyx mori</name>
    <name type="common">Silk moth</name>
    <dbReference type="NCBI Taxonomy" id="7091"/>
    <lineage>
        <taxon>Eukaryota</taxon>
        <taxon>Metazoa</taxon>
        <taxon>Ecdysozoa</taxon>
        <taxon>Arthropoda</taxon>
        <taxon>Hexapoda</taxon>
        <taxon>Insecta</taxon>
        <taxon>Pterygota</taxon>
        <taxon>Neoptera</taxon>
        <taxon>Endopterygota</taxon>
        <taxon>Lepidoptera</taxon>
        <taxon>Glossata</taxon>
        <taxon>Ditrysia</taxon>
        <taxon>Bombycoidea</taxon>
        <taxon>Bombycidae</taxon>
        <taxon>Bombycinae</taxon>
        <taxon>Bombyx</taxon>
    </lineage>
</organism>
<evidence type="ECO:0000256" key="1">
    <source>
        <dbReference type="SAM" id="MobiDB-lite"/>
    </source>
</evidence>
<evidence type="ECO:0000269" key="2">
    <source>
    </source>
</evidence>
<evidence type="ECO:0000303" key="3">
    <source>
    </source>
</evidence>
<evidence type="ECO:0000305" key="4"/>
<feature type="chain" id="PRO_0000274538" description="Unknown protein 14 from 2D-PAGE">
    <location>
        <begin position="1"/>
        <end position="35" status="greater than"/>
    </location>
</feature>
<feature type="region of interest" description="Disordered" evidence="1">
    <location>
        <begin position="1"/>
        <end position="35"/>
    </location>
</feature>
<feature type="non-terminal residue" evidence="3">
    <location>
        <position position="35"/>
    </location>
</feature>
<name>UP14_BOMMO</name>
<protein>
    <recommendedName>
        <fullName>Unknown protein 14 from 2D-PAGE</fullName>
    </recommendedName>
</protein>
<dbReference type="InParanoid" id="P82212"/>
<dbReference type="Proteomes" id="UP000005204">
    <property type="component" value="Unassembled WGS sequence"/>
</dbReference>
<accession>P82212</accession>
<keyword id="KW-0903">Direct protein sequencing</keyword>
<keyword id="KW-1185">Reference proteome</keyword>
<sequence>VVXXQTLXDXRGIYGDQGSIGPXXIXGLQGDRDAD</sequence>
<proteinExistence type="evidence at protein level"/>